<organismHost>
    <name type="scientific">Escherichia coli</name>
    <dbReference type="NCBI Taxonomy" id="562"/>
</organismHost>
<comment type="function">
    <text>This protein allows the phage to reside inactively in the chromosome of its host bacterium. This lysogenic state is maintained by binding of regulatory protein C2 to the OR and OL operators, preventing transcription of proteins necessary for lytic development.</text>
</comment>
<dbReference type="GO" id="GO:0003677">
    <property type="term" value="F:DNA binding"/>
    <property type="evidence" value="ECO:0007669"/>
    <property type="project" value="UniProtKB-KW"/>
</dbReference>
<gene>
    <name type="primary">C2</name>
</gene>
<organism>
    <name type="scientific">Enterobacteria phage P21</name>
    <name type="common">Bacteriophage 21</name>
    <name type="synonym">Bacteriophage P21</name>
    <dbReference type="NCBI Taxonomy" id="10711"/>
    <lineage>
        <taxon>Viruses</taxon>
        <taxon>Duplodnaviria</taxon>
        <taxon>Heunggongvirae</taxon>
        <taxon>Uroviricota</taxon>
        <taxon>Caudoviricetes</taxon>
        <taxon>Lambdavirus</taxon>
        <taxon>Lambdavirus lambda</taxon>
    </lineage>
</organism>
<accession>P69203</accession>
<accession>P03035</accession>
<accession>Q7PCF2</accession>
<proteinExistence type="predicted"/>
<protein>
    <recommendedName>
        <fullName>Repressor protein C2</fullName>
    </recommendedName>
</protein>
<feature type="chain" id="PRO_0000149716" description="Repressor protein C2">
    <location>
        <begin position="1"/>
        <end position="5" status="greater than"/>
    </location>
</feature>
<feature type="non-terminal residue">
    <location>
        <position position="5"/>
    </location>
</feature>
<reference key="1">
    <citation type="journal article" date="1980" name="J. Mol. Biol.">
        <title>Operator sequences of bacteriophages P22 and 21.</title>
        <authorList>
            <person name="Poteete A.R."/>
            <person name="Ptashne M."/>
            <person name="Ballivet M."/>
            <person name="Eisen H."/>
        </authorList>
    </citation>
    <scope>NUCLEOTIDE SEQUENCE</scope>
</reference>
<sequence>MNTQL</sequence>
<name>RPC2_BPP21</name>
<keyword id="KW-0238">DNA-binding</keyword>
<keyword id="KW-0678">Repressor</keyword>
<keyword id="KW-0804">Transcription</keyword>
<keyword id="KW-0805">Transcription regulation</keyword>